<dbReference type="EMBL" id="AY003905">
    <property type="protein sequence ID" value="AAF82183.1"/>
    <property type="molecule type" value="Genomic_DNA"/>
</dbReference>
<dbReference type="EMBL" id="AF456135">
    <property type="protein sequence ID" value="AAL67731.1"/>
    <property type="molecule type" value="Genomic_DNA"/>
</dbReference>
<dbReference type="RefSeq" id="WP_268471515.1">
    <property type="nucleotide sequence ID" value="NZ_CP178596.1"/>
</dbReference>
<dbReference type="GO" id="GO:0005576">
    <property type="term" value="C:extracellular region"/>
    <property type="evidence" value="ECO:0007669"/>
    <property type="project" value="UniProtKB-SubCell"/>
</dbReference>
<dbReference type="GO" id="GO:0005186">
    <property type="term" value="F:pheromone activity"/>
    <property type="evidence" value="ECO:0007669"/>
    <property type="project" value="UniProtKB-KW"/>
</dbReference>
<dbReference type="GO" id="GO:0030420">
    <property type="term" value="P:establishment of competence for transformation"/>
    <property type="evidence" value="ECO:0007669"/>
    <property type="project" value="UniProtKB-KW"/>
</dbReference>
<dbReference type="InterPro" id="IPR009233">
    <property type="entry name" value="Competence_ComX_Bacillus"/>
</dbReference>
<dbReference type="Pfam" id="PF05952">
    <property type="entry name" value="ComX"/>
    <property type="match status" value="1"/>
</dbReference>
<reference key="1">
    <citation type="journal article" date="2001" name="J. Bacteriol.">
        <title>Specificity and genetic polymorphism of the Bacillus competence quorum-sensing system.</title>
        <authorList>
            <person name="Tortosa P."/>
            <person name="Logsdon L."/>
            <person name="Kraigher B."/>
            <person name="Itoh Y."/>
            <person name="Mandic-Mulec I."/>
            <person name="Dubnau D."/>
        </authorList>
    </citation>
    <scope>NUCLEOTIDE SEQUENCE [GENOMIC DNA]</scope>
    <scope>POLYMORPHISM IN COMX; COMQ AND COMP</scope>
    <source>
        <strain>RO-B-2</strain>
    </source>
</reference>
<reference key="2">
    <citation type="journal article" date="2002" name="Mol. Microbiol.">
        <title>Specific activation of the Bacillus quorum-sensing systems by isoprenylated pheromone variants.</title>
        <authorList>
            <person name="Ansaldi M."/>
            <person name="Marolt D."/>
            <person name="Stebe T."/>
            <person name="Mandic-Mulec I."/>
            <person name="Dubnau D."/>
        </authorList>
    </citation>
    <scope>NUCLEOTIDE SEQUENCE [GENOMIC DNA]</scope>
    <scope>FUNCTION</scope>
    <scope>ISOPRENYLATION AT TRP-51</scope>
    <scope>IDENTIFICATION BY MASS SPECTROMETRY</scope>
    <source>
        <strain>RO-B-2</strain>
    </source>
</reference>
<reference key="3">
    <citation type="journal article" date="2004" name="J. Bacteriol.">
        <title>Diversifying selection at the Bacillus quorum-sensing locus and determinants of modification specificity during synthesis of the ComX pheromone.</title>
        <authorList>
            <person name="Ansaldi M."/>
            <person name="Dubnau D."/>
        </authorList>
    </citation>
    <scope>POLYMORPHISM</scope>
    <scope>DETERMINANTS OF MODIFICATION SPECIFICITY</scope>
</reference>
<name>COMX1_BACMO</name>
<accession>Q9K5K2</accession>
<proteinExistence type="evidence at protein level"/>
<evidence type="ECO:0000250" key="1">
    <source>
        <dbReference type="UniProtKB" id="P45453"/>
    </source>
</evidence>
<evidence type="ECO:0000269" key="2">
    <source>
    </source>
</evidence>
<evidence type="ECO:0000269" key="3">
    <source>
    </source>
</evidence>
<evidence type="ECO:0000269" key="4">
    <source>
    </source>
</evidence>
<evidence type="ECO:0000303" key="5">
    <source>
    </source>
</evidence>
<evidence type="ECO:0000303" key="6">
    <source>
    </source>
</evidence>
<evidence type="ECO:0000305" key="7"/>
<evidence type="ECO:0000305" key="8">
    <source>
    </source>
</evidence>
<keyword id="KW-0178">Competence</keyword>
<keyword id="KW-0449">Lipoprotein</keyword>
<keyword id="KW-0588">Pheromone</keyword>
<keyword id="KW-0636">Prenylation</keyword>
<keyword id="KW-0964">Secreted</keyword>
<protein>
    <recommendedName>
        <fullName evidence="6">ComX pheromone</fullName>
    </recommendedName>
    <alternativeName>
        <fullName evidence="7">Competence pheromone</fullName>
    </alternativeName>
</protein>
<comment type="function">
    <text evidence="1 3">Part of a major quorum-sensing system that regulates the development of genetic competence (PubMed:12067344). Acts through the activation of the two-component regulatory system ComP/ComA composed of a sensor histidine kinase, ComP, and a response regulator, ComA (By similarity).</text>
</comment>
<comment type="subunit">
    <text evidence="1">Interacts directly with the sensor histidine kinase ComP and stimulates its activity.</text>
</comment>
<comment type="subcellular location">
    <subcellularLocation>
        <location evidence="1">Secreted</location>
    </subcellularLocation>
</comment>
<comment type="PTM">
    <text evidence="1 3 4">Trp-51 is modified by isoprenylation, probably by geranylation, which is essential for activity (PubMed:12067344). Modified by the tryptophan prenyltransferase ComQ before export to the extracellular environment (By similarity). The type of isoprenyl derivative differs among the different pherotypes and depends on ComX primary sequence (PubMed:12067344, PubMed:14679219).</text>
</comment>
<comment type="miscellaneous">
    <text evidence="2">The DNA sequences encoding ComQ, ComX and the N-terminal two-thirds of ComP show a striking polymorphism, which determines the specificity of the quorum-sensing system in the different pherotypes of Bacillus. In ComX, the sole conserved residue is the modified tryptophan essential for the activity.</text>
</comment>
<organism>
    <name type="scientific">Bacillus mojavensis</name>
    <dbReference type="NCBI Taxonomy" id="72360"/>
    <lineage>
        <taxon>Bacteria</taxon>
        <taxon>Bacillati</taxon>
        <taxon>Bacillota</taxon>
        <taxon>Bacilli</taxon>
        <taxon>Bacillales</taxon>
        <taxon>Bacillaceae</taxon>
        <taxon>Bacillus</taxon>
    </lineage>
</organism>
<gene>
    <name evidence="5" type="primary">comX</name>
</gene>
<sequence>MQEIVGYLVKNPEVLDEVMKGRASLLNIDKDQLKSIVDAFGGLQIYTNGNWVPS</sequence>
<feature type="propeptide" id="PRO_0000454304" evidence="3">
    <location>
        <begin position="1"/>
        <end position="46"/>
    </location>
</feature>
<feature type="peptide" id="PRO_0000454305" description="ComX pheromone" evidence="3">
    <location>
        <begin position="47"/>
        <end position="54"/>
    </location>
</feature>
<feature type="lipid moiety-binding region" description="3'-geranyl-2',N2-cyclotryptophan" evidence="8">
    <location>
        <position position="51"/>
    </location>
</feature>